<proteinExistence type="evidence at protein level"/>
<evidence type="ECO:0000256" key="1">
    <source>
        <dbReference type="SAM" id="MobiDB-lite"/>
    </source>
</evidence>
<evidence type="ECO:0000269" key="2">
    <source>
    </source>
</evidence>
<evidence type="ECO:0000269" key="3">
    <source>
    </source>
</evidence>
<evidence type="ECO:0000269" key="4">
    <source>
    </source>
</evidence>
<evidence type="ECO:0000269" key="5">
    <source>
    </source>
</evidence>
<evidence type="ECO:0000269" key="6">
    <source>
    </source>
</evidence>
<evidence type="ECO:0000269" key="7">
    <source>
    </source>
</evidence>
<evidence type="ECO:0000303" key="8">
    <source>
    </source>
</evidence>
<evidence type="ECO:0000303" key="9">
    <source>
    </source>
</evidence>
<evidence type="ECO:0000303" key="10">
    <source>
    </source>
</evidence>
<evidence type="ECO:0000303" key="11">
    <source>
    </source>
</evidence>
<evidence type="ECO:0000303" key="12">
    <source ref="5"/>
</evidence>
<evidence type="ECO:0000305" key="13"/>
<evidence type="ECO:0000312" key="14">
    <source>
        <dbReference type="EMBL" id="AAG22143.2"/>
    </source>
</evidence>
<evidence type="ECO:0000312" key="15">
    <source>
        <dbReference type="EMBL" id="AAN71153.1"/>
    </source>
</evidence>
<evidence type="ECO:0000312" key="16">
    <source>
        <dbReference type="EMBL" id="AAN71268.2"/>
    </source>
</evidence>
<keyword id="KW-0025">Alternative splicing</keyword>
<keyword id="KW-0963">Cytoplasm</keyword>
<keyword id="KW-0206">Cytoskeleton</keyword>
<keyword id="KW-0493">Microtubule</keyword>
<keyword id="KW-0539">Nucleus</keyword>
<keyword id="KW-0597">Phosphoprotein</keyword>
<keyword id="KW-1185">Reference proteome</keyword>
<dbReference type="EMBL" id="AE014297">
    <property type="protein sequence ID" value="AAF54661.3"/>
    <property type="molecule type" value="Genomic_DNA"/>
</dbReference>
<dbReference type="EMBL" id="AE014297">
    <property type="protein sequence ID" value="AAF54662.3"/>
    <property type="molecule type" value="Genomic_DNA"/>
</dbReference>
<dbReference type="EMBL" id="AE014297">
    <property type="protein sequence ID" value="AAG22142.2"/>
    <property type="molecule type" value="Genomic_DNA"/>
</dbReference>
<dbReference type="EMBL" id="AE014297">
    <property type="protein sequence ID" value="AAG22143.2"/>
    <property type="molecule type" value="Genomic_DNA"/>
</dbReference>
<dbReference type="EMBL" id="AE014297">
    <property type="protein sequence ID" value="AAN13515.1"/>
    <property type="molecule type" value="Genomic_DNA"/>
</dbReference>
<dbReference type="EMBL" id="AE014297">
    <property type="protein sequence ID" value="AAN13516.1"/>
    <property type="molecule type" value="Genomic_DNA"/>
</dbReference>
<dbReference type="EMBL" id="AY069089">
    <property type="protein sequence ID" value="AAL39234.1"/>
    <property type="molecule type" value="mRNA"/>
</dbReference>
<dbReference type="EMBL" id="AY089544">
    <property type="protein sequence ID" value="AAL90282.1"/>
    <property type="status" value="ALT_FRAME"/>
    <property type="molecule type" value="mRNA"/>
</dbReference>
<dbReference type="EMBL" id="BT001398">
    <property type="protein sequence ID" value="AAN71153.1"/>
    <property type="status" value="ALT_INIT"/>
    <property type="molecule type" value="mRNA"/>
</dbReference>
<dbReference type="EMBL" id="BT001843">
    <property type="protein sequence ID" value="AAN71604.1"/>
    <property type="status" value="ALT_SEQ"/>
    <property type="molecule type" value="mRNA"/>
</dbReference>
<dbReference type="EMBL" id="BT001513">
    <property type="protein sequence ID" value="AAN71268.2"/>
    <property type="molecule type" value="mRNA"/>
</dbReference>
<dbReference type="EMBL" id="BT006004">
    <property type="protein sequence ID" value="AAO74687.1"/>
    <property type="molecule type" value="mRNA"/>
</dbReference>
<dbReference type="RefSeq" id="NP_731595.1">
    <molecule id="Q9I7K0-5"/>
    <property type="nucleotide sequence ID" value="NM_169404.4"/>
</dbReference>
<dbReference type="RefSeq" id="NP_731596.1">
    <molecule id="Q9I7K0-2"/>
    <property type="nucleotide sequence ID" value="NM_169405.4"/>
</dbReference>
<dbReference type="RefSeq" id="NP_731597.1">
    <molecule id="Q9I7K0-6"/>
    <property type="nucleotide sequence ID" value="NM_169406.4"/>
</dbReference>
<dbReference type="RefSeq" id="NP_731598.1">
    <molecule id="Q9I7K0-4"/>
    <property type="nucleotide sequence ID" value="NM_169407.4"/>
</dbReference>
<dbReference type="RefSeq" id="NP_731599.1">
    <molecule id="Q9I7K0-1"/>
    <property type="nucleotide sequence ID" value="NM_169408.4"/>
</dbReference>
<dbReference type="RefSeq" id="NP_731600.1">
    <molecule id="Q9I7K0-3"/>
    <property type="nucleotide sequence ID" value="NM_169409.4"/>
</dbReference>
<dbReference type="BioGRID" id="66520">
    <property type="interactions" value="39"/>
</dbReference>
<dbReference type="FunCoup" id="Q9I7K0">
    <property type="interactions" value="151"/>
</dbReference>
<dbReference type="IntAct" id="Q9I7K0">
    <property type="interactions" value="79"/>
</dbReference>
<dbReference type="STRING" id="7227.FBpp0081930"/>
<dbReference type="GlyGen" id="Q9I7K0">
    <property type="glycosylation" value="1 site"/>
</dbReference>
<dbReference type="iPTMnet" id="Q9I7K0"/>
<dbReference type="PaxDb" id="7227-FBpp0081930"/>
<dbReference type="DNASU" id="41392"/>
<dbReference type="EnsemblMetazoa" id="FBtr0082452">
    <molecule id="Q9I7K0-5"/>
    <property type="protein sequence ID" value="FBpp0081928"/>
    <property type="gene ID" value="FBgn0051363"/>
</dbReference>
<dbReference type="EnsemblMetazoa" id="FBtr0082453">
    <molecule id="Q9I7K0-6"/>
    <property type="protein sequence ID" value="FBpp0081929"/>
    <property type="gene ID" value="FBgn0051363"/>
</dbReference>
<dbReference type="EnsemblMetazoa" id="FBtr0082454">
    <molecule id="Q9I7K0-1"/>
    <property type="protein sequence ID" value="FBpp0081930"/>
    <property type="gene ID" value="FBgn0051363"/>
</dbReference>
<dbReference type="EnsemblMetazoa" id="FBtr0082455">
    <molecule id="Q9I7K0-4"/>
    <property type="protein sequence ID" value="FBpp0081931"/>
    <property type="gene ID" value="FBgn0051363"/>
</dbReference>
<dbReference type="EnsemblMetazoa" id="FBtr0082456">
    <molecule id="Q9I7K0-2"/>
    <property type="protein sequence ID" value="FBpp0081932"/>
    <property type="gene ID" value="FBgn0051363"/>
</dbReference>
<dbReference type="EnsemblMetazoa" id="FBtr0082457">
    <molecule id="Q9I7K0-3"/>
    <property type="protein sequence ID" value="FBpp0081933"/>
    <property type="gene ID" value="FBgn0051363"/>
</dbReference>
<dbReference type="GeneID" id="41392"/>
<dbReference type="KEGG" id="dme:Dmel_CG31363"/>
<dbReference type="UCSC" id="CG31363-RA">
    <property type="organism name" value="d. melanogaster"/>
</dbReference>
<dbReference type="UCSC" id="CG31363-RB">
    <property type="organism name" value="d. melanogaster"/>
</dbReference>
<dbReference type="UCSC" id="CG31363-RC">
    <property type="organism name" value="d. melanogaster"/>
</dbReference>
<dbReference type="UCSC" id="CG31363-RD">
    <property type="organism name" value="d. melanogaster"/>
</dbReference>
<dbReference type="UCSC" id="CG31363-RE">
    <molecule id="Q9I7K0-1"/>
    <property type="organism name" value="d. melanogaster"/>
</dbReference>
<dbReference type="UCSC" id="CG31363-RH">
    <property type="organism name" value="d. melanogaster"/>
</dbReference>
<dbReference type="AGR" id="FB:FBgn0051363"/>
<dbReference type="CTD" id="41392"/>
<dbReference type="FlyBase" id="FBgn0051363">
    <property type="gene designation" value="Jupiter"/>
</dbReference>
<dbReference type="VEuPathDB" id="VectorBase:FBgn0051363"/>
<dbReference type="eggNOG" id="ENOG502S7TC">
    <property type="taxonomic scope" value="Eukaryota"/>
</dbReference>
<dbReference type="HOGENOM" id="CLU_076719_0_0_1"/>
<dbReference type="InParanoid" id="Q9I7K0"/>
<dbReference type="OMA" id="GANDFHQ"/>
<dbReference type="OrthoDB" id="6367565at2759"/>
<dbReference type="PhylomeDB" id="Q9I7K0"/>
<dbReference type="SignaLink" id="Q9I7K0"/>
<dbReference type="BioGRID-ORCS" id="41392">
    <property type="hits" value="0 hits in 3 CRISPR screens"/>
</dbReference>
<dbReference type="ChiTaRS" id="Jupiter">
    <property type="organism name" value="fly"/>
</dbReference>
<dbReference type="GenomeRNAi" id="41392"/>
<dbReference type="PRO" id="PR:Q9I7K0"/>
<dbReference type="Proteomes" id="UP000000803">
    <property type="component" value="Chromosome 3R"/>
</dbReference>
<dbReference type="Bgee" id="FBgn0051363">
    <property type="expression patterns" value="Expressed in early elongation stage spermatid (Drosophila) in testis and 280 other cell types or tissues"/>
</dbReference>
<dbReference type="ExpressionAtlas" id="Q9I7K0">
    <property type="expression patterns" value="baseline and differential"/>
</dbReference>
<dbReference type="GO" id="GO:0005829">
    <property type="term" value="C:cytosol"/>
    <property type="evidence" value="ECO:0000314"/>
    <property type="project" value="UniProtKB"/>
</dbReference>
<dbReference type="GO" id="GO:0005874">
    <property type="term" value="C:microtubule"/>
    <property type="evidence" value="ECO:0007669"/>
    <property type="project" value="UniProtKB-KW"/>
</dbReference>
<dbReference type="GO" id="GO:0005875">
    <property type="term" value="C:microtubule associated complex"/>
    <property type="evidence" value="ECO:0000314"/>
    <property type="project" value="UniProtKB"/>
</dbReference>
<dbReference type="GO" id="GO:0005634">
    <property type="term" value="C:nucleus"/>
    <property type="evidence" value="ECO:0000314"/>
    <property type="project" value="UniProtKB"/>
</dbReference>
<dbReference type="GO" id="GO:0005819">
    <property type="term" value="C:spindle"/>
    <property type="evidence" value="ECO:0007669"/>
    <property type="project" value="UniProtKB-SubCell"/>
</dbReference>
<dbReference type="GO" id="GO:0008017">
    <property type="term" value="F:microtubule binding"/>
    <property type="evidence" value="ECO:0000314"/>
    <property type="project" value="UniProtKB"/>
</dbReference>
<dbReference type="GO" id="GO:0005200">
    <property type="term" value="F:structural constituent of cytoskeleton"/>
    <property type="evidence" value="ECO:0000314"/>
    <property type="project" value="UniProtKB"/>
</dbReference>
<dbReference type="GO" id="GO:0031116">
    <property type="term" value="P:positive regulation of microtubule polymerization"/>
    <property type="evidence" value="ECO:0000314"/>
    <property type="project" value="UniProtKB"/>
</dbReference>
<dbReference type="InterPro" id="IPR033335">
    <property type="entry name" value="JUPITER"/>
</dbReference>
<dbReference type="PANTHER" id="PTHR34930">
    <property type="entry name" value="GEO05313P1"/>
    <property type="match status" value="1"/>
</dbReference>
<dbReference type="PANTHER" id="PTHR34930:SF2">
    <property type="entry name" value="MICROTUBULE-ASSOCIATED PROTEIN JUPITER"/>
    <property type="match status" value="1"/>
</dbReference>
<dbReference type="Pfam" id="PF17054">
    <property type="entry name" value="JUPITER"/>
    <property type="match status" value="2"/>
</dbReference>
<sequence>MAAYAAFKHVELYNVGKAKKRVLRPPGGGSSDIFGSEMPQTPRNVKNRMASNIFAAEKDNGVKNNVRQGAHRFYFIGDAPRRGQKTVDSHSRLFGEPTRPITPGKNHMKSSIPFGQNTEAVAAQKLLTTNGHYNGKSGSVSSASSSVSSSTENLKMNSGSRSEGNPVTGEGYKVVANEYSQRQESSNGGTPVINKNRIPPGGYSSGLW</sequence>
<gene>
    <name evidence="14" type="primary">Jupiter</name>
    <name evidence="9" type="synonym">G147</name>
    <name type="ORF">CG31363</name>
</gene>
<organism>
    <name type="scientific">Drosophila melanogaster</name>
    <name type="common">Fruit fly</name>
    <dbReference type="NCBI Taxonomy" id="7227"/>
    <lineage>
        <taxon>Eukaryota</taxon>
        <taxon>Metazoa</taxon>
        <taxon>Ecdysozoa</taxon>
        <taxon>Arthropoda</taxon>
        <taxon>Hexapoda</taxon>
        <taxon>Insecta</taxon>
        <taxon>Pterygota</taxon>
        <taxon>Neoptera</taxon>
        <taxon>Endopterygota</taxon>
        <taxon>Diptera</taxon>
        <taxon>Brachycera</taxon>
        <taxon>Muscomorpha</taxon>
        <taxon>Ephydroidea</taxon>
        <taxon>Drosophilidae</taxon>
        <taxon>Drosophila</taxon>
        <taxon>Sophophora</taxon>
    </lineage>
</organism>
<accession>Q9I7K0</accession>
<accession>Q8IGC9</accession>
<accession>Q8IGZ9</accession>
<accession>Q8IH61</accession>
<accession>Q8INK0</accession>
<accession>Q8INK1</accession>
<accession>Q8SXM9</accession>
<accession>Q8T0S5</accession>
<accession>Q9I7K1</accession>
<accession>Q9VGL5</accession>
<accession>Q9VGL6</accession>
<reference evidence="13" key="1">
    <citation type="journal article" date="2006" name="Cell Motil. Cytoskeleton">
        <title>Jupiter, a new Drosophila protein associated with microtubules.</title>
        <authorList>
            <person name="Karpova N."/>
            <person name="Bobinnec Y."/>
            <person name="Fouix S."/>
            <person name="Huitorel P."/>
            <person name="Debec A."/>
        </authorList>
    </citation>
    <scope>NUCLEOTIDE SEQUENCE [MRNA] (ISOFORM D)</scope>
    <scope>FUNCTION</scope>
    <scope>SUBCELLULAR LOCATION</scope>
    <scope>TISSUE SPECIFICITY</scope>
</reference>
<reference evidence="14" key="2">
    <citation type="journal article" date="2000" name="Science">
        <title>The genome sequence of Drosophila melanogaster.</title>
        <authorList>
            <person name="Adams M.D."/>
            <person name="Celniker S.E."/>
            <person name="Holt R.A."/>
            <person name="Evans C.A."/>
            <person name="Gocayne J.D."/>
            <person name="Amanatides P.G."/>
            <person name="Scherer S.E."/>
            <person name="Li P.W."/>
            <person name="Hoskins R.A."/>
            <person name="Galle R.F."/>
            <person name="George R.A."/>
            <person name="Lewis S.E."/>
            <person name="Richards S."/>
            <person name="Ashburner M."/>
            <person name="Henderson S.N."/>
            <person name="Sutton G.G."/>
            <person name="Wortman J.R."/>
            <person name="Yandell M.D."/>
            <person name="Zhang Q."/>
            <person name="Chen L.X."/>
            <person name="Brandon R.C."/>
            <person name="Rogers Y.-H.C."/>
            <person name="Blazej R.G."/>
            <person name="Champe M."/>
            <person name="Pfeiffer B.D."/>
            <person name="Wan K.H."/>
            <person name="Doyle C."/>
            <person name="Baxter E.G."/>
            <person name="Helt G."/>
            <person name="Nelson C.R."/>
            <person name="Miklos G.L.G."/>
            <person name="Abril J.F."/>
            <person name="Agbayani A."/>
            <person name="An H.-J."/>
            <person name="Andrews-Pfannkoch C."/>
            <person name="Baldwin D."/>
            <person name="Ballew R.M."/>
            <person name="Basu A."/>
            <person name="Baxendale J."/>
            <person name="Bayraktaroglu L."/>
            <person name="Beasley E.M."/>
            <person name="Beeson K.Y."/>
            <person name="Benos P.V."/>
            <person name="Berman B.P."/>
            <person name="Bhandari D."/>
            <person name="Bolshakov S."/>
            <person name="Borkova D."/>
            <person name="Botchan M.R."/>
            <person name="Bouck J."/>
            <person name="Brokstein P."/>
            <person name="Brottier P."/>
            <person name="Burtis K.C."/>
            <person name="Busam D.A."/>
            <person name="Butler H."/>
            <person name="Cadieu E."/>
            <person name="Center A."/>
            <person name="Chandra I."/>
            <person name="Cherry J.M."/>
            <person name="Cawley S."/>
            <person name="Dahlke C."/>
            <person name="Davenport L.B."/>
            <person name="Davies P."/>
            <person name="de Pablos B."/>
            <person name="Delcher A."/>
            <person name="Deng Z."/>
            <person name="Mays A.D."/>
            <person name="Dew I."/>
            <person name="Dietz S.M."/>
            <person name="Dodson K."/>
            <person name="Doup L.E."/>
            <person name="Downes M."/>
            <person name="Dugan-Rocha S."/>
            <person name="Dunkov B.C."/>
            <person name="Dunn P."/>
            <person name="Durbin K.J."/>
            <person name="Evangelista C.C."/>
            <person name="Ferraz C."/>
            <person name="Ferriera S."/>
            <person name="Fleischmann W."/>
            <person name="Fosler C."/>
            <person name="Gabrielian A.E."/>
            <person name="Garg N.S."/>
            <person name="Gelbart W.M."/>
            <person name="Glasser K."/>
            <person name="Glodek A."/>
            <person name="Gong F."/>
            <person name="Gorrell J.H."/>
            <person name="Gu Z."/>
            <person name="Guan P."/>
            <person name="Harris M."/>
            <person name="Harris N.L."/>
            <person name="Harvey D.A."/>
            <person name="Heiman T.J."/>
            <person name="Hernandez J.R."/>
            <person name="Houck J."/>
            <person name="Hostin D."/>
            <person name="Houston K.A."/>
            <person name="Howland T.J."/>
            <person name="Wei M.-H."/>
            <person name="Ibegwam C."/>
            <person name="Jalali M."/>
            <person name="Kalush F."/>
            <person name="Karpen G.H."/>
            <person name="Ke Z."/>
            <person name="Kennison J.A."/>
            <person name="Ketchum K.A."/>
            <person name="Kimmel B.E."/>
            <person name="Kodira C.D."/>
            <person name="Kraft C.L."/>
            <person name="Kravitz S."/>
            <person name="Kulp D."/>
            <person name="Lai Z."/>
            <person name="Lasko P."/>
            <person name="Lei Y."/>
            <person name="Levitsky A.A."/>
            <person name="Li J.H."/>
            <person name="Li Z."/>
            <person name="Liang Y."/>
            <person name="Lin X."/>
            <person name="Liu X."/>
            <person name="Mattei B."/>
            <person name="McIntosh T.C."/>
            <person name="McLeod M.P."/>
            <person name="McPherson D."/>
            <person name="Merkulov G."/>
            <person name="Milshina N.V."/>
            <person name="Mobarry C."/>
            <person name="Morris J."/>
            <person name="Moshrefi A."/>
            <person name="Mount S.M."/>
            <person name="Moy M."/>
            <person name="Murphy B."/>
            <person name="Murphy L."/>
            <person name="Muzny D.M."/>
            <person name="Nelson D.L."/>
            <person name="Nelson D.R."/>
            <person name="Nelson K.A."/>
            <person name="Nixon K."/>
            <person name="Nusskern D.R."/>
            <person name="Pacleb J.M."/>
            <person name="Palazzolo M."/>
            <person name="Pittman G.S."/>
            <person name="Pan S."/>
            <person name="Pollard J."/>
            <person name="Puri V."/>
            <person name="Reese M.G."/>
            <person name="Reinert K."/>
            <person name="Remington K."/>
            <person name="Saunders R.D.C."/>
            <person name="Scheeler F."/>
            <person name="Shen H."/>
            <person name="Shue B.C."/>
            <person name="Siden-Kiamos I."/>
            <person name="Simpson M."/>
            <person name="Skupski M.P."/>
            <person name="Smith T.J."/>
            <person name="Spier E."/>
            <person name="Spradling A.C."/>
            <person name="Stapleton M."/>
            <person name="Strong R."/>
            <person name="Sun E."/>
            <person name="Svirskas R."/>
            <person name="Tector C."/>
            <person name="Turner R."/>
            <person name="Venter E."/>
            <person name="Wang A.H."/>
            <person name="Wang X."/>
            <person name="Wang Z.-Y."/>
            <person name="Wassarman D.A."/>
            <person name="Weinstock G.M."/>
            <person name="Weissenbach J."/>
            <person name="Williams S.M."/>
            <person name="Woodage T."/>
            <person name="Worley K.C."/>
            <person name="Wu D."/>
            <person name="Yang S."/>
            <person name="Yao Q.A."/>
            <person name="Ye J."/>
            <person name="Yeh R.-F."/>
            <person name="Zaveri J.S."/>
            <person name="Zhan M."/>
            <person name="Zhang G."/>
            <person name="Zhao Q."/>
            <person name="Zheng L."/>
            <person name="Zheng X.H."/>
            <person name="Zhong F.N."/>
            <person name="Zhong W."/>
            <person name="Zhou X."/>
            <person name="Zhu S.C."/>
            <person name="Zhu X."/>
            <person name="Smith H.O."/>
            <person name="Gibbs R.A."/>
            <person name="Myers E.W."/>
            <person name="Rubin G.M."/>
            <person name="Venter J.C."/>
        </authorList>
    </citation>
    <scope>NUCLEOTIDE SEQUENCE [LARGE SCALE GENOMIC DNA]</scope>
    <source>
        <strain evidence="2">Berkeley</strain>
    </source>
</reference>
<reference evidence="13 14" key="3">
    <citation type="journal article" date="2002" name="Genome Biol.">
        <title>Annotation of the Drosophila melanogaster euchromatic genome: a systematic review.</title>
        <authorList>
            <person name="Misra S."/>
            <person name="Crosby M.A."/>
            <person name="Mungall C.J."/>
            <person name="Matthews B.B."/>
            <person name="Campbell K.S."/>
            <person name="Hradecky P."/>
            <person name="Huang Y."/>
            <person name="Kaminker J.S."/>
            <person name="Millburn G.H."/>
            <person name="Prochnik S.E."/>
            <person name="Smith C.D."/>
            <person name="Tupy J.L."/>
            <person name="Whitfield E.J."/>
            <person name="Bayraktaroglu L."/>
            <person name="Berman B.P."/>
            <person name="Bettencourt B.R."/>
            <person name="Celniker S.E."/>
            <person name="de Grey A.D.N.J."/>
            <person name="Drysdale R.A."/>
            <person name="Harris N.L."/>
            <person name="Richter J."/>
            <person name="Russo S."/>
            <person name="Schroeder A.J."/>
            <person name="Shu S.Q."/>
            <person name="Stapleton M."/>
            <person name="Yamada C."/>
            <person name="Ashburner M."/>
            <person name="Gelbart W.M."/>
            <person name="Rubin G.M."/>
            <person name="Lewis S.E."/>
        </authorList>
    </citation>
    <scope>GENOME REANNOTATION</scope>
    <scope>ALTERNATIVE SPLICING</scope>
    <source>
        <strain>Berkeley</strain>
    </source>
</reference>
<reference evidence="13 15" key="4">
    <citation type="journal article" date="2002" name="Genome Biol.">
        <title>A Drosophila full-length cDNA resource.</title>
        <authorList>
            <person name="Stapleton M."/>
            <person name="Carlson J.W."/>
            <person name="Brokstein P."/>
            <person name="Yu C."/>
            <person name="Champe M."/>
            <person name="George R.A."/>
            <person name="Guarin H."/>
            <person name="Kronmiller B."/>
            <person name="Pacleb J.M."/>
            <person name="Park S."/>
            <person name="Wan K.H."/>
            <person name="Rubin G.M."/>
            <person name="Celniker S.E."/>
        </authorList>
    </citation>
    <scope>NUCLEOTIDE SEQUENCE [LARGE SCALE MRNA] (ISOFORMS A; B; D AND H)</scope>
    <source>
        <strain evidence="15">Berkeley</strain>
        <tissue evidence="4">Embryo</tissue>
        <tissue evidence="4">Head</tissue>
    </source>
</reference>
<reference evidence="13 16" key="5">
    <citation type="submission" date="2006-11" db="EMBL/GenBank/DDBJ databases">
        <authorList>
            <person name="Stapleton M."/>
            <person name="Brokstein P."/>
            <person name="Hong L."/>
            <person name="Agbayani A."/>
            <person name="Carlson J.W."/>
            <person name="Champe M."/>
            <person name="Chavez C."/>
            <person name="Dorsett V."/>
            <person name="Dresnek D."/>
            <person name="Farfan D."/>
            <person name="Frise E."/>
            <person name="George R.A."/>
            <person name="Gonzalez M."/>
            <person name="Guarin H."/>
            <person name="Kapadia B."/>
            <person name="Kronmiller B."/>
            <person name="Li P.W."/>
            <person name="Liao G."/>
            <person name="Miranda A."/>
            <person name="Mungall C.J."/>
            <person name="Nunoo J."/>
            <person name="Pacleb J.M."/>
            <person name="Paragas V."/>
            <person name="Park S."/>
            <person name="Patel S."/>
            <person name="Phouanenavong S."/>
            <person name="Wan K.H."/>
            <person name="Yu C."/>
            <person name="Lewis S.E."/>
            <person name="Rubin G.M."/>
            <person name="Celniker S.E."/>
        </authorList>
    </citation>
    <scope>NUCLEOTIDE SEQUENCE [LARGE SCALE MRNA] (ISOFORMS C AND H)</scope>
    <source>
        <strain evidence="16">Berkeley</strain>
        <tissue>Embryo</tissue>
    </source>
</reference>
<reference evidence="13" key="6">
    <citation type="journal article" date="2007" name="Mol. Biosyst.">
        <title>An integrated chemical, mass spectrometric and computational strategy for (quantitative) phosphoproteomics: application to Drosophila melanogaster Kc167 cells.</title>
        <authorList>
            <person name="Bodenmiller B."/>
            <person name="Mueller L.N."/>
            <person name="Pedrioli P.G.A."/>
            <person name="Pflieger D."/>
            <person name="Juenger M.A."/>
            <person name="Eng J.K."/>
            <person name="Aebersold R."/>
            <person name="Tao W.A."/>
        </authorList>
    </citation>
    <scope>PHOSPHORYLATION [LARGE SCALE ANALYSIS] AT SER-30; THR-41; THR-102; SER-111 AND SER-150</scope>
    <scope>IDENTIFICATION BY MASS SPECTROMETRY</scope>
</reference>
<reference evidence="13" key="7">
    <citation type="journal article" date="2008" name="J. Proteome Res.">
        <title>Phosphoproteome analysis of Drosophila melanogaster embryos.</title>
        <authorList>
            <person name="Zhai B."/>
            <person name="Villen J."/>
            <person name="Beausoleil S.A."/>
            <person name="Mintseris J."/>
            <person name="Gygi S.P."/>
        </authorList>
    </citation>
    <scope>PHOSPHORYLATION [LARGE SCALE ANALYSIS] AT THR-98; THR-102; SER-139 AND SER-150</scope>
    <scope>IDENTIFICATION BY MASS SPECTROMETRY</scope>
    <source>
        <tissue evidence="7">Embryo</tissue>
    </source>
</reference>
<reference evidence="13" key="8">
    <citation type="journal article" date="2001" name="Proc. Natl. Acad. Sci. U.S.A.">
        <title>A protein trap strategy to detect GFP-tagged proteins expressed from their endogenous loci in Drosophila.</title>
        <authorList>
            <person name="Morin X."/>
            <person name="Daneman R."/>
            <person name="Zavortink M."/>
            <person name="Chia W."/>
        </authorList>
    </citation>
    <scope>IDENTIFICATION</scope>
    <scope>SUBCELLULAR LOCATION</scope>
    <scope>TISSUE SPECIFICITY</scope>
</reference>
<name>JUPIT_DROME</name>
<feature type="chain" id="PRO_0000355128" description="Microtubule-associated protein Jupiter">
    <location>
        <begin position="1"/>
        <end position="208"/>
    </location>
</feature>
<feature type="region of interest" description="Disordered" evidence="1">
    <location>
        <begin position="24"/>
        <end position="43"/>
    </location>
</feature>
<feature type="region of interest" description="Disordered" evidence="1">
    <location>
        <begin position="82"/>
        <end position="106"/>
    </location>
</feature>
<feature type="region of interest" description="Disordered" evidence="1">
    <location>
        <begin position="132"/>
        <end position="208"/>
    </location>
</feature>
<feature type="compositionally biased region" description="Basic and acidic residues" evidence="1">
    <location>
        <begin position="82"/>
        <end position="93"/>
    </location>
</feature>
<feature type="compositionally biased region" description="Low complexity" evidence="1">
    <location>
        <begin position="137"/>
        <end position="150"/>
    </location>
</feature>
<feature type="compositionally biased region" description="Polar residues" evidence="1">
    <location>
        <begin position="151"/>
        <end position="165"/>
    </location>
</feature>
<feature type="compositionally biased region" description="Polar residues" evidence="1">
    <location>
        <begin position="178"/>
        <end position="189"/>
    </location>
</feature>
<feature type="modified residue" description="Phosphoserine" evidence="6">
    <location>
        <position position="30"/>
    </location>
</feature>
<feature type="modified residue" description="Phosphothreonine" evidence="6">
    <location>
        <position position="41"/>
    </location>
</feature>
<feature type="modified residue" description="Phosphothreonine" evidence="7">
    <location>
        <position position="98"/>
    </location>
</feature>
<feature type="modified residue" description="Phosphothreonine" evidence="6 7">
    <location>
        <position position="102"/>
    </location>
</feature>
<feature type="modified residue" description="Phosphoserine" evidence="6">
    <location>
        <position position="111"/>
    </location>
</feature>
<feature type="modified residue" description="Phosphoserine" evidence="7">
    <location>
        <position position="139"/>
    </location>
</feature>
<feature type="modified residue" description="Phosphoserine" evidence="6 7">
    <location>
        <position position="150"/>
    </location>
</feature>
<feature type="splice variant" id="VSP_052968" description="In isoform B." evidence="8 10">
    <original>AAYAAFKHVELYNVGKAKKRVLRPPGGGSSDIFGSEMPQTPRNVKNRMASNIFAAEKDNGVKNNVRQGAHRFYFIGDAPRRGQKTVDSHSRLFGEPTRPITPGKNHMKSSIPFGQNTEAVAAQKLLTTNGHYNGKSGSVSSASSSVSSSTENLKMNSGSRS</original>
    <variation>STRPDTKETSPRVSLCPPEPARTETPIPPADDALSIDNSCRDSEVGDVPADNSTVTKSDQVNEGCQTRRDSGNNPEQPYSLNKMAGVSNVKEPLGLCPNEIKEEQQACSKLDSRNPITGLGLNGDGVGGLKPKKLKIR</variation>
    <location>
        <begin position="2"/>
        <end position="162"/>
    </location>
</feature>
<feature type="splice variant" id="VSP_052969" description="In isoform A, isoform D and isoform H." evidence="8 10 11 12">
    <original>AAYAAFKHVELYNVGKAKKR</original>
    <variation>ISNFDCTDNQASSK</variation>
    <location>
        <begin position="2"/>
        <end position="21"/>
    </location>
</feature>
<feature type="splice variant" id="VSP_052970" description="In isoform A, isoform C and isoform D." evidence="8 10 11 12">
    <location>
        <begin position="66"/>
        <end position="76"/>
    </location>
</feature>
<feature type="splice variant" id="VSP_052971" description="In isoform A." evidence="8 10">
    <original>SE</original>
    <variation>SVFRNMSK</variation>
    <location>
        <begin position="162"/>
        <end position="163"/>
    </location>
</feature>
<feature type="sequence conflict" description="In Ref. 4; AAN71604." evidence="13" ref="4">
    <original>D</original>
    <variation>T</variation>
    <location>
        <position position="78"/>
    </location>
</feature>
<protein>
    <recommendedName>
        <fullName evidence="11">Microtubule-associated protein Jupiter</fullName>
    </recommendedName>
</protein>
<comment type="function">
    <text evidence="5">Binds to all microtubule populations.</text>
</comment>
<comment type="subcellular location">
    <subcellularLocation>
        <location evidence="3 5">Nucleus</location>
    </subcellularLocation>
    <subcellularLocation>
        <location evidence="3 5">Cytoplasm</location>
    </subcellularLocation>
    <subcellularLocation>
        <location evidence="3 5">Cytoplasm</location>
        <location evidence="3 5">Cytoskeleton</location>
    </subcellularLocation>
    <subcellularLocation>
        <location evidence="3 5">Cytoplasm</location>
        <location evidence="3 5">Cytoskeleton</location>
        <location evidence="3 5">Spindle</location>
    </subcellularLocation>
</comment>
<comment type="alternative products">
    <event type="alternative splicing"/>
    <isoform>
        <id>Q9I7K0-1</id>
        <name evidence="2">E</name>
        <sequence type="displayed"/>
    </isoform>
    <isoform>
        <id>Q9I7K0-2</id>
        <name evidence="2">A</name>
        <sequence type="described" ref="VSP_052969 VSP_052970 VSP_052971"/>
    </isoform>
    <isoform>
        <id>Q9I7K0-3</id>
        <name evidence="2">B</name>
        <sequence type="described" ref="VSP_052968"/>
    </isoform>
    <isoform>
        <id>Q9I7K0-4</id>
        <name evidence="2">C</name>
        <sequence type="described" ref="VSP_052970"/>
    </isoform>
    <isoform>
        <id>Q9I7K0-5</id>
        <name evidence="5">D</name>
        <sequence type="described" ref="VSP_052969 VSP_052970"/>
    </isoform>
    <isoform>
        <id>Q9I7K0-6</id>
        <name evidence="2">H</name>
        <sequence type="described" ref="VSP_052969"/>
    </isoform>
</comment>
<comment type="tissue specificity">
    <text evidence="3 5">Ubiquitous expression throughout development. Expressed during cell division in the syncytial embryo. Expressed in developing photoreceptors of the eye imaginal disk of the third larval stage. In adults, highly expressed in neurons of the brain, concentrated in axons. In the adult ovaries, expression accumulates in the germarium and the polar follicular cells as well as in the oocyte along the microtubule network.</text>
</comment>
<comment type="similarity">
    <text evidence="13">Belongs to the MAP Jupiter family.</text>
</comment>
<comment type="sequence caution" evidence="13">
    <conflict type="frameshift">
        <sequence resource="EMBL-CDS" id="AAL90282"/>
    </conflict>
</comment>
<comment type="sequence caution" evidence="13">
    <conflict type="erroneous initiation">
        <sequence resource="EMBL-CDS" id="AAN71153"/>
    </conflict>
</comment>
<comment type="sequence caution" evidence="13">
    <conflict type="miscellaneous discrepancy">
        <sequence resource="EMBL-CDS" id="AAN71604"/>
    </conflict>
    <text>Intron retention.</text>
</comment>